<reference key="1">
    <citation type="journal article" date="2003" name="J. Bacteriol.">
        <title>Comparative analyses of the complete genome sequences of Pierce's disease and citrus variegated chlorosis strains of Xylella fastidiosa.</title>
        <authorList>
            <person name="Van Sluys M.A."/>
            <person name="de Oliveira M.C."/>
            <person name="Monteiro-Vitorello C.B."/>
            <person name="Miyaki C.Y."/>
            <person name="Furlan L.R."/>
            <person name="Camargo L.E.A."/>
            <person name="da Silva A.C.R."/>
            <person name="Moon D.H."/>
            <person name="Takita M.A."/>
            <person name="Lemos E.G.M."/>
            <person name="Machado M.A."/>
            <person name="Ferro M.I.T."/>
            <person name="da Silva F.R."/>
            <person name="Goldman M.H.S."/>
            <person name="Goldman G.H."/>
            <person name="Lemos M.V.F."/>
            <person name="El-Dorry H."/>
            <person name="Tsai S.M."/>
            <person name="Carrer H."/>
            <person name="Carraro D.M."/>
            <person name="de Oliveira R.C."/>
            <person name="Nunes L.R."/>
            <person name="Siqueira W.J."/>
            <person name="Coutinho L.L."/>
            <person name="Kimura E.T."/>
            <person name="Ferro E.S."/>
            <person name="Harakava R."/>
            <person name="Kuramae E.E."/>
            <person name="Marino C.L."/>
            <person name="Giglioti E."/>
            <person name="Abreu I.L."/>
            <person name="Alves L.M.C."/>
            <person name="do Amaral A.M."/>
            <person name="Baia G.S."/>
            <person name="Blanco S.R."/>
            <person name="Brito M.S."/>
            <person name="Cannavan F.S."/>
            <person name="Celestino A.V."/>
            <person name="da Cunha A.F."/>
            <person name="Fenille R.C."/>
            <person name="Ferro J.A."/>
            <person name="Formighieri E.F."/>
            <person name="Kishi L.T."/>
            <person name="Leoni S.G."/>
            <person name="Oliveira A.R."/>
            <person name="Rosa V.E. Jr."/>
            <person name="Sassaki F.T."/>
            <person name="Sena J.A.D."/>
            <person name="de Souza A.A."/>
            <person name="Truffi D."/>
            <person name="Tsukumo F."/>
            <person name="Yanai G.M."/>
            <person name="Zaros L.G."/>
            <person name="Civerolo E.L."/>
            <person name="Simpson A.J.G."/>
            <person name="Almeida N.F. Jr."/>
            <person name="Setubal J.C."/>
            <person name="Kitajima J.P."/>
        </authorList>
    </citation>
    <scope>NUCLEOTIDE SEQUENCE [LARGE SCALE GENOMIC DNA]</scope>
    <source>
        <strain>Temecula1 / ATCC 700964</strain>
    </source>
</reference>
<feature type="chain" id="PRO_0000113903" description="Protein GrpE">
    <location>
        <begin position="1"/>
        <end position="172"/>
    </location>
</feature>
<feature type="region of interest" description="Disordered" evidence="2">
    <location>
        <begin position="1"/>
        <end position="23"/>
    </location>
</feature>
<dbReference type="EMBL" id="AE009442">
    <property type="protein sequence ID" value="AAO29218.1"/>
    <property type="status" value="ALT_INIT"/>
    <property type="molecule type" value="Genomic_DNA"/>
</dbReference>
<dbReference type="RefSeq" id="WP_004085850.1">
    <property type="nucleotide sequence ID" value="NC_004556.1"/>
</dbReference>
<dbReference type="SMR" id="Q87BS7"/>
<dbReference type="GeneID" id="93905188"/>
<dbReference type="KEGG" id="xft:PD_1371"/>
<dbReference type="HOGENOM" id="CLU_057217_6_0_6"/>
<dbReference type="Proteomes" id="UP000002516">
    <property type="component" value="Chromosome"/>
</dbReference>
<dbReference type="GO" id="GO:0005829">
    <property type="term" value="C:cytosol"/>
    <property type="evidence" value="ECO:0007669"/>
    <property type="project" value="TreeGrafter"/>
</dbReference>
<dbReference type="GO" id="GO:0000774">
    <property type="term" value="F:adenyl-nucleotide exchange factor activity"/>
    <property type="evidence" value="ECO:0007669"/>
    <property type="project" value="InterPro"/>
</dbReference>
<dbReference type="GO" id="GO:0042803">
    <property type="term" value="F:protein homodimerization activity"/>
    <property type="evidence" value="ECO:0007669"/>
    <property type="project" value="InterPro"/>
</dbReference>
<dbReference type="GO" id="GO:0051087">
    <property type="term" value="F:protein-folding chaperone binding"/>
    <property type="evidence" value="ECO:0007669"/>
    <property type="project" value="InterPro"/>
</dbReference>
<dbReference type="GO" id="GO:0051082">
    <property type="term" value="F:unfolded protein binding"/>
    <property type="evidence" value="ECO:0007669"/>
    <property type="project" value="TreeGrafter"/>
</dbReference>
<dbReference type="GO" id="GO:0006457">
    <property type="term" value="P:protein folding"/>
    <property type="evidence" value="ECO:0007669"/>
    <property type="project" value="InterPro"/>
</dbReference>
<dbReference type="CDD" id="cd00446">
    <property type="entry name" value="GrpE"/>
    <property type="match status" value="1"/>
</dbReference>
<dbReference type="FunFam" id="2.30.22.10:FF:000001">
    <property type="entry name" value="Protein GrpE"/>
    <property type="match status" value="1"/>
</dbReference>
<dbReference type="Gene3D" id="3.90.20.20">
    <property type="match status" value="1"/>
</dbReference>
<dbReference type="Gene3D" id="2.30.22.10">
    <property type="entry name" value="Head domain of nucleotide exchange factor GrpE"/>
    <property type="match status" value="1"/>
</dbReference>
<dbReference type="HAMAP" id="MF_01151">
    <property type="entry name" value="GrpE"/>
    <property type="match status" value="1"/>
</dbReference>
<dbReference type="InterPro" id="IPR000740">
    <property type="entry name" value="GrpE"/>
</dbReference>
<dbReference type="InterPro" id="IPR013805">
    <property type="entry name" value="GrpE_coiled_coil"/>
</dbReference>
<dbReference type="InterPro" id="IPR009012">
    <property type="entry name" value="GrpE_head"/>
</dbReference>
<dbReference type="NCBIfam" id="NF010745">
    <property type="entry name" value="PRK14147.1"/>
    <property type="match status" value="1"/>
</dbReference>
<dbReference type="PANTHER" id="PTHR21237">
    <property type="entry name" value="GRPE PROTEIN"/>
    <property type="match status" value="1"/>
</dbReference>
<dbReference type="PANTHER" id="PTHR21237:SF23">
    <property type="entry name" value="GRPE PROTEIN HOMOLOG, MITOCHONDRIAL"/>
    <property type="match status" value="1"/>
</dbReference>
<dbReference type="Pfam" id="PF01025">
    <property type="entry name" value="GrpE"/>
    <property type="match status" value="1"/>
</dbReference>
<dbReference type="PRINTS" id="PR00773">
    <property type="entry name" value="GRPEPROTEIN"/>
</dbReference>
<dbReference type="SUPFAM" id="SSF58014">
    <property type="entry name" value="Coiled-coil domain of nucleotide exchange factor GrpE"/>
    <property type="match status" value="1"/>
</dbReference>
<dbReference type="SUPFAM" id="SSF51064">
    <property type="entry name" value="Head domain of nucleotide exchange factor GrpE"/>
    <property type="match status" value="1"/>
</dbReference>
<dbReference type="PROSITE" id="PS01071">
    <property type="entry name" value="GRPE"/>
    <property type="match status" value="1"/>
</dbReference>
<protein>
    <recommendedName>
        <fullName evidence="1">Protein GrpE</fullName>
    </recommendedName>
    <alternativeName>
        <fullName evidence="1">HSP-70 cofactor</fullName>
    </alternativeName>
</protein>
<evidence type="ECO:0000255" key="1">
    <source>
        <dbReference type="HAMAP-Rule" id="MF_01151"/>
    </source>
</evidence>
<evidence type="ECO:0000256" key="2">
    <source>
        <dbReference type="SAM" id="MobiDB-lite"/>
    </source>
</evidence>
<evidence type="ECO:0000305" key="3"/>
<gene>
    <name evidence="1" type="primary">grpE</name>
    <name type="ordered locus">PD_1371</name>
</gene>
<sequence>MNQDHPECDSEELTQNSPETDPLKVEVETLRGEIASIKADVLRERAELENQRKRLIRDVEQARKFANEKLLGELLPVFDSLDAGLTASGSEPSPLRDGLELTYKQLLKVAIDNGLMLLDPVGQLFNPEHHQAISQTEVTDVEPGHVIQVFQKGYLLNERLLRPALVVVAKQD</sequence>
<comment type="function">
    <text evidence="1">Participates actively in the response to hyperosmotic and heat shock by preventing the aggregation of stress-denatured proteins, in association with DnaK and GrpE. It is the nucleotide exchange factor for DnaK and may function as a thermosensor. Unfolded proteins bind initially to DnaJ; upon interaction with the DnaJ-bound protein, DnaK hydrolyzes its bound ATP, resulting in the formation of a stable complex. GrpE releases ADP from DnaK; ATP binding to DnaK triggers the release of the substrate protein, thus completing the reaction cycle. Several rounds of ATP-dependent interactions between DnaJ, DnaK and GrpE are required for fully efficient folding.</text>
</comment>
<comment type="subunit">
    <text evidence="1">Homodimer.</text>
</comment>
<comment type="subcellular location">
    <subcellularLocation>
        <location evidence="1">Cytoplasm</location>
    </subcellularLocation>
</comment>
<comment type="similarity">
    <text evidence="1">Belongs to the GrpE family.</text>
</comment>
<comment type="sequence caution" evidence="3">
    <conflict type="erroneous initiation">
        <sequence resource="EMBL-CDS" id="AAO29218"/>
    </conflict>
</comment>
<proteinExistence type="inferred from homology"/>
<name>GRPE_XYLFT</name>
<accession>Q87BS7</accession>
<keyword id="KW-0143">Chaperone</keyword>
<keyword id="KW-0963">Cytoplasm</keyword>
<keyword id="KW-1185">Reference proteome</keyword>
<keyword id="KW-0346">Stress response</keyword>
<organism>
    <name type="scientific">Xylella fastidiosa (strain Temecula1 / ATCC 700964)</name>
    <dbReference type="NCBI Taxonomy" id="183190"/>
    <lineage>
        <taxon>Bacteria</taxon>
        <taxon>Pseudomonadati</taxon>
        <taxon>Pseudomonadota</taxon>
        <taxon>Gammaproteobacteria</taxon>
        <taxon>Lysobacterales</taxon>
        <taxon>Lysobacteraceae</taxon>
        <taxon>Xylella</taxon>
    </lineage>
</organism>